<name>DCA16_BOVIN</name>
<gene>
    <name type="primary">DCAF16</name>
</gene>
<feature type="chain" id="PRO_0000301963" description="DDB1- and CUL4-associated factor 16">
    <location>
        <begin position="1"/>
        <end position="175"/>
    </location>
</feature>
<feature type="region of interest" description="Disordered" evidence="2">
    <location>
        <begin position="1"/>
        <end position="42"/>
    </location>
</feature>
<feature type="compositionally biased region" description="Acidic residues" evidence="2">
    <location>
        <begin position="12"/>
        <end position="21"/>
    </location>
</feature>
<feature type="compositionally biased region" description="Acidic residues" evidence="2">
    <location>
        <begin position="29"/>
        <end position="41"/>
    </location>
</feature>
<feature type="modified residue" description="N6-acetyllysine" evidence="1">
    <location>
        <position position="61"/>
    </location>
</feature>
<protein>
    <recommendedName>
        <fullName>DDB1- and CUL4-associated factor 16</fullName>
    </recommendedName>
</protein>
<keyword id="KW-0007">Acetylation</keyword>
<keyword id="KW-0539">Nucleus</keyword>
<keyword id="KW-1185">Reference proteome</keyword>
<keyword id="KW-0833">Ubl conjugation pathway</keyword>
<proteinExistence type="evidence at transcript level"/>
<comment type="function">
    <text evidence="1">Functions as a substrate recognition component for CUL4-DDB1 E3 ubiquitin-protein ligase complex, which mediates ubiquitination and proteasome-dependent degradation of nuclear proteins.</text>
</comment>
<comment type="pathway">
    <text>Protein modification; protein ubiquitination.</text>
</comment>
<comment type="subunit">
    <text evidence="1">Interacts with DDB1 and CUL4A.</text>
</comment>
<comment type="subcellular location">
    <subcellularLocation>
        <location evidence="1">Nucleus</location>
    </subcellularLocation>
</comment>
<reference key="1">
    <citation type="submission" date="2006-02" db="EMBL/GenBank/DDBJ databases">
        <authorList>
            <consortium name="NIH - Mammalian Gene Collection (MGC) project"/>
        </authorList>
    </citation>
    <scope>NUCLEOTIDE SEQUENCE [LARGE SCALE MRNA]</scope>
    <source>
        <strain>Hereford</strain>
        <tissue>Uterus</tissue>
    </source>
</reference>
<evidence type="ECO:0000250" key="1">
    <source>
        <dbReference type="UniProtKB" id="Q9NXF7"/>
    </source>
</evidence>
<evidence type="ECO:0000256" key="2">
    <source>
        <dbReference type="SAM" id="MobiDB-lite"/>
    </source>
</evidence>
<sequence>MGPRNPSPDPLSESESEEEENTNYLNESSGEEWDSSEEEDPVVPNLTPLESLAWQVKCLLKYSTTWKPLNPNSWLYHAKLLDASTPVHILREIGLRLSHCSHCVPKLEPIPEWPPLASCGVPPFQKPLISPSRLSRDHATLNGALQFATKQLSRTLSRATPHAFLPKLVPLAFSS</sequence>
<accession>Q2HJA2</accession>
<dbReference type="EMBL" id="BC113235">
    <property type="protein sequence ID" value="AAI13236.1"/>
    <property type="molecule type" value="mRNA"/>
</dbReference>
<dbReference type="RefSeq" id="NP_001071615.1">
    <property type="nucleotide sequence ID" value="NM_001078147.1"/>
</dbReference>
<dbReference type="SMR" id="Q2HJA2"/>
<dbReference type="FunCoup" id="Q2HJA2">
    <property type="interactions" value="841"/>
</dbReference>
<dbReference type="STRING" id="9913.ENSBTAP00000054212"/>
<dbReference type="PaxDb" id="9913-ENSBTAP00000054212"/>
<dbReference type="GeneID" id="777600"/>
<dbReference type="KEGG" id="bta:777600"/>
<dbReference type="CTD" id="54876"/>
<dbReference type="eggNOG" id="ENOG502RC7Y">
    <property type="taxonomic scope" value="Eukaryota"/>
</dbReference>
<dbReference type="HOGENOM" id="CLU_111172_0_0_1"/>
<dbReference type="InParanoid" id="Q2HJA2"/>
<dbReference type="OrthoDB" id="27187at2759"/>
<dbReference type="UniPathway" id="UPA00143"/>
<dbReference type="Proteomes" id="UP000009136">
    <property type="component" value="Unplaced"/>
</dbReference>
<dbReference type="GO" id="GO:0080008">
    <property type="term" value="C:Cul4-RING E3 ubiquitin ligase complex"/>
    <property type="evidence" value="ECO:0000250"/>
    <property type="project" value="UniProtKB"/>
</dbReference>
<dbReference type="GO" id="GO:0005634">
    <property type="term" value="C:nucleus"/>
    <property type="evidence" value="ECO:0007669"/>
    <property type="project" value="UniProtKB-SubCell"/>
</dbReference>
<dbReference type="GO" id="GO:0016567">
    <property type="term" value="P:protein ubiquitination"/>
    <property type="evidence" value="ECO:0007669"/>
    <property type="project" value="UniProtKB-UniPathway"/>
</dbReference>
<dbReference type="InterPro" id="IPR028216">
    <property type="entry name" value="DCAF16"/>
</dbReference>
<dbReference type="PANTHER" id="PTHR16194">
    <property type="entry name" value="DDB1- AND CUL4-ASSOCIATED FACTOR 16"/>
    <property type="match status" value="1"/>
</dbReference>
<dbReference type="PANTHER" id="PTHR16194:SF0">
    <property type="entry name" value="DDB1- AND CUL4-ASSOCIATED FACTOR 16"/>
    <property type="match status" value="1"/>
</dbReference>
<dbReference type="Pfam" id="PF15349">
    <property type="entry name" value="DCA16"/>
    <property type="match status" value="1"/>
</dbReference>
<organism>
    <name type="scientific">Bos taurus</name>
    <name type="common">Bovine</name>
    <dbReference type="NCBI Taxonomy" id="9913"/>
    <lineage>
        <taxon>Eukaryota</taxon>
        <taxon>Metazoa</taxon>
        <taxon>Chordata</taxon>
        <taxon>Craniata</taxon>
        <taxon>Vertebrata</taxon>
        <taxon>Euteleostomi</taxon>
        <taxon>Mammalia</taxon>
        <taxon>Eutheria</taxon>
        <taxon>Laurasiatheria</taxon>
        <taxon>Artiodactyla</taxon>
        <taxon>Ruminantia</taxon>
        <taxon>Pecora</taxon>
        <taxon>Bovidae</taxon>
        <taxon>Bovinae</taxon>
        <taxon>Bos</taxon>
    </lineage>
</organism>